<keyword id="KW-0539">Nucleus</keyword>
<keyword id="KW-1185">Reference proteome</keyword>
<sequence length="272" mass="30777">MVVLENPEAGPEEAAAAARVVPGGRRTLPLPGCLPALASSQVKRLSASRRKQHFINQAVRNSDLVPKAKGRKSLQRLENTQYLLTLLETDGATPGPEDGDLAPPAAPGIFAEACSNETYVEIWNDFMNRSGEEQERVLRYLEDEGKSKARRRGPTRGEDRRREDPAYTPRECFQRISRRLRAVLKRSRIPMETLETWEERLLRFFSVSPQAVYTAMLDNSFERLLLHAICQYMDLISASADLEGKRQMKVSNRHLDFLPPGLLLSAYLEQRS</sequence>
<proteinExistence type="evidence at transcript level"/>
<comment type="subcellular location">
    <subcellularLocation>
        <location evidence="3">Nucleus</location>
    </subcellularLocation>
</comment>
<accession>Q2KIL7</accession>
<reference key="1">
    <citation type="submission" date="2006-01" db="EMBL/GenBank/DDBJ databases">
        <authorList>
            <consortium name="NIH - Mammalian Gene Collection (MGC) project"/>
        </authorList>
    </citation>
    <scope>NUCLEOTIDE SEQUENCE [LARGE SCALE MRNA]</scope>
    <source>
        <strain>Hereford</strain>
        <tissue>Testis</tissue>
    </source>
</reference>
<feature type="chain" id="PRO_0000281430" description="R3H domain-containing protein 4">
    <location>
        <begin position="1"/>
        <end position="272"/>
    </location>
</feature>
<feature type="domain" description="R3H" evidence="1">
    <location>
        <begin position="191"/>
        <end position="254"/>
    </location>
</feature>
<feature type="region of interest" description="Disordered" evidence="2">
    <location>
        <begin position="141"/>
        <end position="167"/>
    </location>
</feature>
<feature type="compositionally biased region" description="Basic and acidic residues" evidence="2">
    <location>
        <begin position="155"/>
        <end position="165"/>
    </location>
</feature>
<gene>
    <name type="primary">R3HDM4</name>
</gene>
<name>R3HD4_BOVIN</name>
<dbReference type="EMBL" id="BC112591">
    <property type="protein sequence ID" value="AAI12592.1"/>
    <property type="molecule type" value="mRNA"/>
</dbReference>
<dbReference type="RefSeq" id="NP_001040013.1">
    <property type="nucleotide sequence ID" value="NM_001046548.2"/>
</dbReference>
<dbReference type="FunCoup" id="Q2KIL7">
    <property type="interactions" value="744"/>
</dbReference>
<dbReference type="STRING" id="9913.ENSBTAP00000064171"/>
<dbReference type="PaxDb" id="9913-ENSBTAP00000054872"/>
<dbReference type="GeneID" id="614948"/>
<dbReference type="KEGG" id="bta:614948"/>
<dbReference type="CTD" id="91300"/>
<dbReference type="VEuPathDB" id="HostDB:ENSBTAG00000046406"/>
<dbReference type="eggNOG" id="KOG1478">
    <property type="taxonomic scope" value="Eukaryota"/>
</dbReference>
<dbReference type="HOGENOM" id="CLU_081608_0_0_1"/>
<dbReference type="InParanoid" id="Q2KIL7"/>
<dbReference type="OMA" id="NATYMEV"/>
<dbReference type="OrthoDB" id="75169at2759"/>
<dbReference type="TreeFam" id="TF331754"/>
<dbReference type="Proteomes" id="UP000009136">
    <property type="component" value="Chromosome 7"/>
</dbReference>
<dbReference type="Bgee" id="ENSBTAG00000046406">
    <property type="expression patterns" value="Expressed in neutrophil and 104 other cell types or tissues"/>
</dbReference>
<dbReference type="GO" id="GO:0005634">
    <property type="term" value="C:nucleus"/>
    <property type="evidence" value="ECO:0007669"/>
    <property type="project" value="UniProtKB-SubCell"/>
</dbReference>
<dbReference type="GO" id="GO:0003676">
    <property type="term" value="F:nucleic acid binding"/>
    <property type="evidence" value="ECO:0007669"/>
    <property type="project" value="InterPro"/>
</dbReference>
<dbReference type="CDD" id="cd02325">
    <property type="entry name" value="R3H"/>
    <property type="match status" value="1"/>
</dbReference>
<dbReference type="InterPro" id="IPR025952">
    <property type="entry name" value="R3H-assoc_dom"/>
</dbReference>
<dbReference type="InterPro" id="IPR001374">
    <property type="entry name" value="R3H_dom"/>
</dbReference>
<dbReference type="InterPro" id="IPR036867">
    <property type="entry name" value="R3H_dom_sf"/>
</dbReference>
<dbReference type="InterPro" id="IPR039629">
    <property type="entry name" value="R3HDM4"/>
</dbReference>
<dbReference type="PANTHER" id="PTHR32019">
    <property type="entry name" value="R3H DOMAIN-CONTAINING PROTEIN 4"/>
    <property type="match status" value="1"/>
</dbReference>
<dbReference type="PANTHER" id="PTHR32019:SF2">
    <property type="entry name" value="R3H DOMAIN-CONTAINING PROTEIN 4"/>
    <property type="match status" value="1"/>
</dbReference>
<dbReference type="Pfam" id="PF01424">
    <property type="entry name" value="R3H"/>
    <property type="match status" value="1"/>
</dbReference>
<dbReference type="Pfam" id="PF13902">
    <property type="entry name" value="R3H-assoc"/>
    <property type="match status" value="1"/>
</dbReference>
<dbReference type="SUPFAM" id="SSF82708">
    <property type="entry name" value="R3H domain"/>
    <property type="match status" value="1"/>
</dbReference>
<dbReference type="PROSITE" id="PS51061">
    <property type="entry name" value="R3H"/>
    <property type="match status" value="1"/>
</dbReference>
<organism>
    <name type="scientific">Bos taurus</name>
    <name type="common">Bovine</name>
    <dbReference type="NCBI Taxonomy" id="9913"/>
    <lineage>
        <taxon>Eukaryota</taxon>
        <taxon>Metazoa</taxon>
        <taxon>Chordata</taxon>
        <taxon>Craniata</taxon>
        <taxon>Vertebrata</taxon>
        <taxon>Euteleostomi</taxon>
        <taxon>Mammalia</taxon>
        <taxon>Eutheria</taxon>
        <taxon>Laurasiatheria</taxon>
        <taxon>Artiodactyla</taxon>
        <taxon>Ruminantia</taxon>
        <taxon>Pecora</taxon>
        <taxon>Bovidae</taxon>
        <taxon>Bovinae</taxon>
        <taxon>Bos</taxon>
    </lineage>
</organism>
<protein>
    <recommendedName>
        <fullName>R3H domain-containing protein 4</fullName>
    </recommendedName>
</protein>
<evidence type="ECO:0000255" key="1">
    <source>
        <dbReference type="PROSITE-ProRule" id="PRU00382"/>
    </source>
</evidence>
<evidence type="ECO:0000256" key="2">
    <source>
        <dbReference type="SAM" id="MobiDB-lite"/>
    </source>
</evidence>
<evidence type="ECO:0000305" key="3"/>